<evidence type="ECO:0000255" key="1">
    <source>
        <dbReference type="HAMAP-Rule" id="MF_00740"/>
    </source>
</evidence>
<name>DEOB_ANASK</name>
<proteinExistence type="inferred from homology"/>
<sequence length="388" mass="41239">MNRRLVILVADSAGCGALPDAAAYGDAGSDTLGNTSRAVGGLSLPVLGRMGLGHVTAIQGVPPDPAPTAFHGRMAERSEGKDTTTGHWEMMGVVLRQGLRTFPGGFPPEIVEAFVRETGAPGVLGNTVASGTVIIQELGEEHQRTGKPIVYTSADSVFQVAAHTDTVPLETLYAWCRTARRILDPWRVARVIARPFVGAPGKYARTYDRKDFSMPPPATTVLERLVEAGVPVVGVGKIPDIFDRRGITEEIHTAGNADGLARTAALLDRVDRGLVFVNLVDFDMLYGHRNDPAGYARALEELDRALPAILDRLGPGDLLALTADHGCDPTTPSTDHSREHVPLLVYAPGRGGGDLGTRTTFADLGATVAEYFGVRSDVGTSFLAEVTR</sequence>
<reference key="1">
    <citation type="submission" date="2008-08" db="EMBL/GenBank/DDBJ databases">
        <title>Complete sequence of Anaeromyxobacter sp. K.</title>
        <authorList>
            <consortium name="US DOE Joint Genome Institute"/>
            <person name="Lucas S."/>
            <person name="Copeland A."/>
            <person name="Lapidus A."/>
            <person name="Glavina del Rio T."/>
            <person name="Dalin E."/>
            <person name="Tice H."/>
            <person name="Bruce D."/>
            <person name="Goodwin L."/>
            <person name="Pitluck S."/>
            <person name="Saunders E."/>
            <person name="Brettin T."/>
            <person name="Detter J.C."/>
            <person name="Han C."/>
            <person name="Larimer F."/>
            <person name="Land M."/>
            <person name="Hauser L."/>
            <person name="Kyrpides N."/>
            <person name="Ovchinnikiva G."/>
            <person name="Beliaev A."/>
        </authorList>
    </citation>
    <scope>NUCLEOTIDE SEQUENCE [LARGE SCALE GENOMIC DNA]</scope>
    <source>
        <strain>K</strain>
    </source>
</reference>
<organism>
    <name type="scientific">Anaeromyxobacter sp. (strain K)</name>
    <dbReference type="NCBI Taxonomy" id="447217"/>
    <lineage>
        <taxon>Bacteria</taxon>
        <taxon>Pseudomonadati</taxon>
        <taxon>Myxococcota</taxon>
        <taxon>Myxococcia</taxon>
        <taxon>Myxococcales</taxon>
        <taxon>Cystobacterineae</taxon>
        <taxon>Anaeromyxobacteraceae</taxon>
        <taxon>Anaeromyxobacter</taxon>
    </lineage>
</organism>
<protein>
    <recommendedName>
        <fullName evidence="1">Phosphopentomutase</fullName>
        <ecNumber evidence="1">5.4.2.7</ecNumber>
    </recommendedName>
    <alternativeName>
        <fullName evidence="1">Phosphodeoxyribomutase</fullName>
    </alternativeName>
</protein>
<comment type="function">
    <text evidence="1">Isomerase that catalyzes the conversion of deoxy-ribose 1-phosphate (dRib-1-P) and ribose 1-phosphate (Rib-1-P) to deoxy-ribose 5-phosphate (dRib-5-P) and ribose 5-phosphate (Rib-5-P), respectively.</text>
</comment>
<comment type="catalytic activity">
    <reaction evidence="1">
        <text>2-deoxy-alpha-D-ribose 1-phosphate = 2-deoxy-D-ribose 5-phosphate</text>
        <dbReference type="Rhea" id="RHEA:27658"/>
        <dbReference type="ChEBI" id="CHEBI:57259"/>
        <dbReference type="ChEBI" id="CHEBI:62877"/>
        <dbReference type="EC" id="5.4.2.7"/>
    </reaction>
</comment>
<comment type="catalytic activity">
    <reaction evidence="1">
        <text>alpha-D-ribose 1-phosphate = D-ribose 5-phosphate</text>
        <dbReference type="Rhea" id="RHEA:18793"/>
        <dbReference type="ChEBI" id="CHEBI:57720"/>
        <dbReference type="ChEBI" id="CHEBI:78346"/>
        <dbReference type="EC" id="5.4.2.7"/>
    </reaction>
</comment>
<comment type="cofactor">
    <cofactor evidence="1">
        <name>Mn(2+)</name>
        <dbReference type="ChEBI" id="CHEBI:29035"/>
    </cofactor>
    <text evidence="1">Binds 2 manganese ions.</text>
</comment>
<comment type="pathway">
    <text evidence="1">Carbohydrate degradation; 2-deoxy-D-ribose 1-phosphate degradation; D-glyceraldehyde 3-phosphate and acetaldehyde from 2-deoxy-alpha-D-ribose 1-phosphate: step 1/2.</text>
</comment>
<comment type="subcellular location">
    <subcellularLocation>
        <location evidence="1">Cytoplasm</location>
    </subcellularLocation>
</comment>
<comment type="similarity">
    <text evidence="1">Belongs to the phosphopentomutase family.</text>
</comment>
<accession>B4UF79</accession>
<feature type="chain" id="PRO_1000133058" description="Phosphopentomutase">
    <location>
        <begin position="1"/>
        <end position="388"/>
    </location>
</feature>
<feature type="binding site" evidence="1">
    <location>
        <position position="11"/>
    </location>
    <ligand>
        <name>Mn(2+)</name>
        <dbReference type="ChEBI" id="CHEBI:29035"/>
        <label>1</label>
    </ligand>
</feature>
<feature type="binding site" evidence="1">
    <location>
        <position position="283"/>
    </location>
    <ligand>
        <name>Mn(2+)</name>
        <dbReference type="ChEBI" id="CHEBI:29035"/>
        <label>2</label>
    </ligand>
</feature>
<feature type="binding site" evidence="1">
    <location>
        <position position="288"/>
    </location>
    <ligand>
        <name>Mn(2+)</name>
        <dbReference type="ChEBI" id="CHEBI:29035"/>
        <label>2</label>
    </ligand>
</feature>
<feature type="binding site" evidence="1">
    <location>
        <position position="324"/>
    </location>
    <ligand>
        <name>Mn(2+)</name>
        <dbReference type="ChEBI" id="CHEBI:29035"/>
        <label>1</label>
    </ligand>
</feature>
<feature type="binding site" evidence="1">
    <location>
        <position position="325"/>
    </location>
    <ligand>
        <name>Mn(2+)</name>
        <dbReference type="ChEBI" id="CHEBI:29035"/>
        <label>1</label>
    </ligand>
</feature>
<feature type="binding site" evidence="1">
    <location>
        <position position="336"/>
    </location>
    <ligand>
        <name>Mn(2+)</name>
        <dbReference type="ChEBI" id="CHEBI:29035"/>
        <label>2</label>
    </ligand>
</feature>
<gene>
    <name evidence="1" type="primary">deoB</name>
    <name type="ordered locus">AnaeK_0954</name>
</gene>
<keyword id="KW-0963">Cytoplasm</keyword>
<keyword id="KW-0413">Isomerase</keyword>
<keyword id="KW-0464">Manganese</keyword>
<keyword id="KW-0479">Metal-binding</keyword>
<dbReference type="EC" id="5.4.2.7" evidence="1"/>
<dbReference type="EMBL" id="CP001131">
    <property type="protein sequence ID" value="ACG72189.1"/>
    <property type="molecule type" value="Genomic_DNA"/>
</dbReference>
<dbReference type="RefSeq" id="WP_012525016.1">
    <property type="nucleotide sequence ID" value="NC_011145.1"/>
</dbReference>
<dbReference type="SMR" id="B4UF79"/>
<dbReference type="KEGG" id="ank:AnaeK_0954"/>
<dbReference type="HOGENOM" id="CLU_053861_0_0_7"/>
<dbReference type="OrthoDB" id="9769930at2"/>
<dbReference type="UniPathway" id="UPA00002">
    <property type="reaction ID" value="UER00467"/>
</dbReference>
<dbReference type="Proteomes" id="UP000001871">
    <property type="component" value="Chromosome"/>
</dbReference>
<dbReference type="GO" id="GO:0005829">
    <property type="term" value="C:cytosol"/>
    <property type="evidence" value="ECO:0007669"/>
    <property type="project" value="TreeGrafter"/>
</dbReference>
<dbReference type="GO" id="GO:0000287">
    <property type="term" value="F:magnesium ion binding"/>
    <property type="evidence" value="ECO:0007669"/>
    <property type="project" value="InterPro"/>
</dbReference>
<dbReference type="GO" id="GO:0030145">
    <property type="term" value="F:manganese ion binding"/>
    <property type="evidence" value="ECO:0007669"/>
    <property type="project" value="UniProtKB-UniRule"/>
</dbReference>
<dbReference type="GO" id="GO:0008973">
    <property type="term" value="F:phosphopentomutase activity"/>
    <property type="evidence" value="ECO:0007669"/>
    <property type="project" value="UniProtKB-UniRule"/>
</dbReference>
<dbReference type="GO" id="GO:0006018">
    <property type="term" value="P:2-deoxyribose 1-phosphate catabolic process"/>
    <property type="evidence" value="ECO:0007669"/>
    <property type="project" value="UniProtKB-UniRule"/>
</dbReference>
<dbReference type="GO" id="GO:0006015">
    <property type="term" value="P:5-phosphoribose 1-diphosphate biosynthetic process"/>
    <property type="evidence" value="ECO:0007669"/>
    <property type="project" value="UniProtKB-UniPathway"/>
</dbReference>
<dbReference type="GO" id="GO:0043094">
    <property type="term" value="P:metabolic compound salvage"/>
    <property type="evidence" value="ECO:0007669"/>
    <property type="project" value="InterPro"/>
</dbReference>
<dbReference type="GO" id="GO:0009117">
    <property type="term" value="P:nucleotide metabolic process"/>
    <property type="evidence" value="ECO:0007669"/>
    <property type="project" value="InterPro"/>
</dbReference>
<dbReference type="CDD" id="cd16009">
    <property type="entry name" value="PPM"/>
    <property type="match status" value="1"/>
</dbReference>
<dbReference type="Gene3D" id="3.40.720.10">
    <property type="entry name" value="Alkaline Phosphatase, subunit A"/>
    <property type="match status" value="1"/>
</dbReference>
<dbReference type="Gene3D" id="3.30.70.1250">
    <property type="entry name" value="Phosphopentomutase"/>
    <property type="match status" value="1"/>
</dbReference>
<dbReference type="HAMAP" id="MF_00740">
    <property type="entry name" value="Phosphopentomut"/>
    <property type="match status" value="1"/>
</dbReference>
<dbReference type="InterPro" id="IPR017850">
    <property type="entry name" value="Alkaline_phosphatase_core_sf"/>
</dbReference>
<dbReference type="InterPro" id="IPR010045">
    <property type="entry name" value="DeoB"/>
</dbReference>
<dbReference type="InterPro" id="IPR006124">
    <property type="entry name" value="Metalloenzyme"/>
</dbReference>
<dbReference type="InterPro" id="IPR024052">
    <property type="entry name" value="Phosphopentomutase_DeoB_cap_sf"/>
</dbReference>
<dbReference type="NCBIfam" id="TIGR01696">
    <property type="entry name" value="deoB"/>
    <property type="match status" value="1"/>
</dbReference>
<dbReference type="NCBIfam" id="NF003766">
    <property type="entry name" value="PRK05362.1"/>
    <property type="match status" value="1"/>
</dbReference>
<dbReference type="PANTHER" id="PTHR21110">
    <property type="entry name" value="PHOSPHOPENTOMUTASE"/>
    <property type="match status" value="1"/>
</dbReference>
<dbReference type="PANTHER" id="PTHR21110:SF0">
    <property type="entry name" value="PHOSPHOPENTOMUTASE"/>
    <property type="match status" value="1"/>
</dbReference>
<dbReference type="Pfam" id="PF01676">
    <property type="entry name" value="Metalloenzyme"/>
    <property type="match status" value="1"/>
</dbReference>
<dbReference type="PIRSF" id="PIRSF001491">
    <property type="entry name" value="Ppentomutase"/>
    <property type="match status" value="1"/>
</dbReference>
<dbReference type="SUPFAM" id="SSF53649">
    <property type="entry name" value="Alkaline phosphatase-like"/>
    <property type="match status" value="1"/>
</dbReference>
<dbReference type="SUPFAM" id="SSF143856">
    <property type="entry name" value="DeoB insert domain-like"/>
    <property type="match status" value="1"/>
</dbReference>